<comment type="function">
    <text evidence="1">Transports viral genome to neighboring plant cells directly through plasmosdesmata, without any budding. The movement protein allows efficient cell to cell propagation, by bypassing the host cell wall barrier. Acts by forming a tubular structure at the host plasmodesmata, enlarging it enough to allow free passage of virion capsids (By similarity).</text>
</comment>
<comment type="subcellular location">
    <subcellularLocation>
        <location evidence="1">Host cell junction</location>
        <location evidence="1">Host plasmodesma</location>
    </subcellularLocation>
    <text evidence="1">Assembles into long tubular structures at the surface of the infected protoplast.</text>
</comment>
<comment type="similarity">
    <text evidence="2">Belongs to the ilarvirus movement protein family.</text>
</comment>
<evidence type="ECO:0000250" key="1"/>
<evidence type="ECO:0000305" key="2"/>
<keyword id="KW-1031">Host cell junction</keyword>
<keyword id="KW-1185">Reference proteome</keyword>
<keyword id="KW-0813">Transport</keyword>
<keyword id="KW-0916">Viral movement protein</keyword>
<feature type="chain" id="PRO_0000083253" description="Movement protein">
    <location>
        <begin position="1"/>
        <end position="289"/>
    </location>
</feature>
<protein>
    <recommendedName>
        <fullName>Movement protein</fullName>
        <shortName>MP</shortName>
    </recommendedName>
    <alternativeName>
        <fullName>Protein 3A</fullName>
    </alternativeName>
</protein>
<accession>P03597</accession>
<sequence length="289" mass="31675">MALAPTMKALTFSADDETSLEKAVTEALSGSVDLNMGLRRCAAFPAENTGAFLCELTTKETKSFIGKFSDKVRGRVFIDHAVIHMMYIPVILNTTHAIAELKLKNLATGDELYGGTKVNLNKAFILTMTWPRSLFAEAVHNHKGLYLGGTVSCASSVPAHAKIGMWYPIWSEKVSIKQLYQNTIDIHKTEAIETFTPTMISSDKEMRSLLRSRASIDVAAKTREKPVICSERVSLLDQHTQGVDFTVTEIEPEKDDDAGTSILGPKMVPIEQVPSVKLSSEAGRNLLTA</sequence>
<gene>
    <name type="ORF">ORF3a</name>
</gene>
<dbReference type="EMBL" id="X00435">
    <property type="protein sequence ID" value="CAA25132.1"/>
    <property type="molecule type" value="Genomic_RNA"/>
</dbReference>
<dbReference type="PIR" id="A04205">
    <property type="entry name" value="WMBV3T"/>
</dbReference>
<dbReference type="RefSeq" id="NP_620773.1">
    <property type="nucleotide sequence ID" value="NC_003845.1"/>
</dbReference>
<dbReference type="KEGG" id="vg:962659"/>
<dbReference type="Proteomes" id="UP000007795">
    <property type="component" value="Genome"/>
</dbReference>
<dbReference type="GO" id="GO:0044219">
    <property type="term" value="C:host cell plasmodesma"/>
    <property type="evidence" value="ECO:0007669"/>
    <property type="project" value="UniProtKB-SubCell"/>
</dbReference>
<dbReference type="GO" id="GO:0046740">
    <property type="term" value="P:transport of virus in host, cell to cell"/>
    <property type="evidence" value="ECO:0007669"/>
    <property type="project" value="UniProtKB-KW"/>
</dbReference>
<dbReference type="InterPro" id="IPR002538">
    <property type="entry name" value="Bromo_MP"/>
</dbReference>
<dbReference type="Pfam" id="PF01573">
    <property type="entry name" value="Bromo_MP"/>
    <property type="match status" value="1"/>
</dbReference>
<organism>
    <name type="scientific">Tobacco streak virus (strain WC)</name>
    <name type="common">TSV</name>
    <dbReference type="NCBI Taxonomy" id="12318"/>
    <lineage>
        <taxon>Viruses</taxon>
        <taxon>Riboviria</taxon>
        <taxon>Orthornavirae</taxon>
        <taxon>Kitrinoviricota</taxon>
        <taxon>Alsuviricetes</taxon>
        <taxon>Martellivirales</taxon>
        <taxon>Bromoviridae</taxon>
        <taxon>Ilarvirus</taxon>
        <taxon>Tobacco streak virus</taxon>
    </lineage>
</organism>
<reference key="1">
    <citation type="journal article" date="1984" name="Nucleic Acids Res.">
        <title>Complete nucleotide sequence of tobacco streak virus RNA 3.</title>
        <authorList>
            <person name="Cornelissen B.J.C."/>
            <person name="Janssen H."/>
            <person name="Zuidema D."/>
            <person name="Bol J.F."/>
        </authorList>
    </citation>
    <scope>NUCLEOTIDE SEQUENCE [GENOMIC RNA]</scope>
</reference>
<organismHost>
    <name type="scientific">Asparagus officinalis</name>
    <name type="common">Garden asparagus</name>
    <dbReference type="NCBI Taxonomy" id="4686"/>
</organismHost>
<organismHost>
    <name type="scientific">Dahlia</name>
    <dbReference type="NCBI Taxonomy" id="41562"/>
</organismHost>
<organismHost>
    <name type="scientific">Glycine max</name>
    <name type="common">Soybean</name>
    <name type="synonym">Glycine hispida</name>
    <dbReference type="NCBI Taxonomy" id="3847"/>
</organismHost>
<organismHost>
    <name type="scientific">Gossypium herbaceum</name>
    <name type="common">Levant cotton</name>
    <name type="synonym">Arabian cotton</name>
    <dbReference type="NCBI Taxonomy" id="34274"/>
</organismHost>
<organismHost>
    <name type="scientific">Melilotus albus</name>
    <name type="common">White sweet clover</name>
    <name type="synonym">Melilotus officinalis subsp. albus</name>
    <dbReference type="NCBI Taxonomy" id="47082"/>
</organismHost>
<organismHost>
    <name type="scientific">Nicotiana tabacum</name>
    <name type="common">Common tobacco</name>
    <dbReference type="NCBI Taxonomy" id="4097"/>
</organismHost>
<organismHost>
    <name type="scientific">Phaseolus vulgaris</name>
    <name type="common">Kidney bean</name>
    <name type="synonym">French bean</name>
    <dbReference type="NCBI Taxonomy" id="3885"/>
</organismHost>
<organismHost>
    <name type="scientific">Rosa setigera</name>
    <dbReference type="NCBI Taxonomy" id="137000"/>
</organismHost>
<organismHost>
    <name type="scientific">Trifolium pratense</name>
    <name type="common">Red clover</name>
    <dbReference type="NCBI Taxonomy" id="57577"/>
</organismHost>
<proteinExistence type="inferred from homology"/>
<name>MVP_TOBSV</name>